<dbReference type="EC" id="1.14.-.-"/>
<dbReference type="EMBL" id="AE014296">
    <property type="protein sequence ID" value="AAF49240.2"/>
    <property type="molecule type" value="Genomic_DNA"/>
</dbReference>
<dbReference type="EMBL" id="AY058426">
    <property type="protein sequence ID" value="AAL13655.1"/>
    <property type="molecule type" value="mRNA"/>
</dbReference>
<dbReference type="RefSeq" id="NP_001287109.1">
    <property type="nucleotide sequence ID" value="NM_001300180.1"/>
</dbReference>
<dbReference type="RefSeq" id="NP_649052.1">
    <property type="nucleotide sequence ID" value="NM_140795.3"/>
</dbReference>
<dbReference type="SMR" id="Q9VVR9"/>
<dbReference type="BioGRID" id="65318">
    <property type="interactions" value="1"/>
</dbReference>
<dbReference type="DIP" id="DIP-23677N"/>
<dbReference type="FunCoup" id="Q9VVR9">
    <property type="interactions" value="27"/>
</dbReference>
<dbReference type="IntAct" id="Q9VVR9">
    <property type="interactions" value="1"/>
</dbReference>
<dbReference type="STRING" id="7227.FBpp0311798"/>
<dbReference type="PaxDb" id="7227-FBpp0074858"/>
<dbReference type="DNASU" id="40037"/>
<dbReference type="EnsemblMetazoa" id="FBtr0075091">
    <property type="protein sequence ID" value="FBpp0074858"/>
    <property type="gene ID" value="FBgn0036806"/>
</dbReference>
<dbReference type="EnsemblMetazoa" id="FBtr0345812">
    <property type="protein sequence ID" value="FBpp0311798"/>
    <property type="gene ID" value="FBgn0036806"/>
</dbReference>
<dbReference type="GeneID" id="40037"/>
<dbReference type="KEGG" id="dme:Dmel_CG4120"/>
<dbReference type="UCSC" id="CG4120-RA">
    <property type="organism name" value="d. melanogaster"/>
</dbReference>
<dbReference type="AGR" id="FB:FBgn0036806"/>
<dbReference type="CTD" id="40037"/>
<dbReference type="FlyBase" id="FBgn0036806">
    <property type="gene designation" value="Cyp12c1"/>
</dbReference>
<dbReference type="VEuPathDB" id="VectorBase:FBgn0036806"/>
<dbReference type="eggNOG" id="KOG0159">
    <property type="taxonomic scope" value="Eukaryota"/>
</dbReference>
<dbReference type="HOGENOM" id="CLU_001570_28_0_1"/>
<dbReference type="InParanoid" id="Q9VVR9"/>
<dbReference type="OMA" id="SNGPEWG"/>
<dbReference type="OrthoDB" id="3945418at2759"/>
<dbReference type="PhylomeDB" id="Q9VVR9"/>
<dbReference type="BioGRID-ORCS" id="40037">
    <property type="hits" value="0 hits in 3 CRISPR screens"/>
</dbReference>
<dbReference type="GenomeRNAi" id="40037"/>
<dbReference type="PRO" id="PR:Q9VVR9"/>
<dbReference type="Proteomes" id="UP000000803">
    <property type="component" value="Chromosome 3L"/>
</dbReference>
<dbReference type="Bgee" id="FBgn0036806">
    <property type="expression patterns" value="Expressed in embryonic/larval hemocyte (Drosophila) and 46 other cell types or tissues"/>
</dbReference>
<dbReference type="ExpressionAtlas" id="Q9VVR9">
    <property type="expression patterns" value="baseline and differential"/>
</dbReference>
<dbReference type="GO" id="GO:0031966">
    <property type="term" value="C:mitochondrial membrane"/>
    <property type="evidence" value="ECO:0007669"/>
    <property type="project" value="UniProtKB-SubCell"/>
</dbReference>
<dbReference type="GO" id="GO:0020037">
    <property type="term" value="F:heme binding"/>
    <property type="evidence" value="ECO:0007669"/>
    <property type="project" value="InterPro"/>
</dbReference>
<dbReference type="GO" id="GO:0005506">
    <property type="term" value="F:iron ion binding"/>
    <property type="evidence" value="ECO:0007669"/>
    <property type="project" value="InterPro"/>
</dbReference>
<dbReference type="GO" id="GO:0004497">
    <property type="term" value="F:monooxygenase activity"/>
    <property type="evidence" value="ECO:0007669"/>
    <property type="project" value="UniProtKB-KW"/>
</dbReference>
<dbReference type="GO" id="GO:0016705">
    <property type="term" value="F:oxidoreductase activity, acting on paired donors, with incorporation or reduction of molecular oxygen"/>
    <property type="evidence" value="ECO:0007669"/>
    <property type="project" value="InterPro"/>
</dbReference>
<dbReference type="CDD" id="cd11054">
    <property type="entry name" value="CYP24A1-like"/>
    <property type="match status" value="1"/>
</dbReference>
<dbReference type="FunFam" id="1.10.630.10:FF:000006">
    <property type="entry name" value="Cytochrome P450 302a1, mitochondrial"/>
    <property type="match status" value="1"/>
</dbReference>
<dbReference type="Gene3D" id="1.10.630.10">
    <property type="entry name" value="Cytochrome P450"/>
    <property type="match status" value="1"/>
</dbReference>
<dbReference type="InterPro" id="IPR050479">
    <property type="entry name" value="CYP11_CYP27_families"/>
</dbReference>
<dbReference type="InterPro" id="IPR001128">
    <property type="entry name" value="Cyt_P450"/>
</dbReference>
<dbReference type="InterPro" id="IPR017972">
    <property type="entry name" value="Cyt_P450_CS"/>
</dbReference>
<dbReference type="InterPro" id="IPR002401">
    <property type="entry name" value="Cyt_P450_E_grp-I"/>
</dbReference>
<dbReference type="InterPro" id="IPR036396">
    <property type="entry name" value="Cyt_P450_sf"/>
</dbReference>
<dbReference type="PANTHER" id="PTHR24279">
    <property type="entry name" value="CYTOCHROME P450"/>
    <property type="match status" value="1"/>
</dbReference>
<dbReference type="PANTHER" id="PTHR24279:SF120">
    <property type="entry name" value="CYTOCHROME P450"/>
    <property type="match status" value="1"/>
</dbReference>
<dbReference type="Pfam" id="PF00067">
    <property type="entry name" value="p450"/>
    <property type="match status" value="1"/>
</dbReference>
<dbReference type="PRINTS" id="PR00463">
    <property type="entry name" value="EP450I"/>
</dbReference>
<dbReference type="PRINTS" id="PR00385">
    <property type="entry name" value="P450"/>
</dbReference>
<dbReference type="SUPFAM" id="SSF48264">
    <property type="entry name" value="Cytochrome P450"/>
    <property type="match status" value="1"/>
</dbReference>
<dbReference type="PROSITE" id="PS00086">
    <property type="entry name" value="CYTOCHROME_P450"/>
    <property type="match status" value="1"/>
</dbReference>
<feature type="transit peptide" description="Mitochondrion" evidence="2">
    <location>
        <begin position="1"/>
        <end status="unknown"/>
    </location>
</feature>
<feature type="chain" id="PRO_0000003612" description="Probable cytochrome P450 12c1, mitochondrial">
    <location>
        <begin status="unknown"/>
        <end position="524"/>
    </location>
</feature>
<feature type="binding site" description="axial binding residue" evidence="1">
    <location>
        <position position="470"/>
    </location>
    <ligand>
        <name>heme</name>
        <dbReference type="ChEBI" id="CHEBI:30413"/>
    </ligand>
    <ligandPart>
        <name>Fe</name>
        <dbReference type="ChEBI" id="CHEBI:18248"/>
    </ligandPart>
</feature>
<sequence>MLRLTVKHGLRANSQLAATRNPDASSYVQQLESEWEGAKPFTELPGPTRWQLFRGFQKGGEYHQLGMDDVMRLYKKQFGDICLIPGLFGMPSTVFTFNVETFEKVYRTEGQWPVRGGAEPVIHYRNKRKDEFFKNCMGLFGNGAEWGKNRSAVNPVLMQHRNVAIYLKPMQRVNRQFVNRIREIRDKESQEVPGDFMNTINHLTFESVATVALDRELGLLREANPPPEASKLFKNIEVLMDSFFDLGVRPSLYRYIPTPTYKKFSRAMDEIFDTCSMYVNQAIERIDRKSSQGDSNDHKSVLEQLLQIDRKLAVVMAMDMLMGGVDTTSTAISGILLNLAKNPEKQQRLREEVLSKLTSLHSEFTVEDMKSLPYLRAVIKESLRLYPVTFGNARSAGADVVLDGYRIPKGTKLLMTNSFLLKDDRLYPRAKEFIPERWLRRKDDDKSDVLMNKDLNAFIYLPFGFGPRMCVGKRIVDLEMELTVANLVRNFHIEYNYSTEKPYKCRFLYKPNIPLKFKFTDLKY</sequence>
<organism>
    <name type="scientific">Drosophila melanogaster</name>
    <name type="common">Fruit fly</name>
    <dbReference type="NCBI Taxonomy" id="7227"/>
    <lineage>
        <taxon>Eukaryota</taxon>
        <taxon>Metazoa</taxon>
        <taxon>Ecdysozoa</taxon>
        <taxon>Arthropoda</taxon>
        <taxon>Hexapoda</taxon>
        <taxon>Insecta</taxon>
        <taxon>Pterygota</taxon>
        <taxon>Neoptera</taxon>
        <taxon>Endopterygota</taxon>
        <taxon>Diptera</taxon>
        <taxon>Brachycera</taxon>
        <taxon>Muscomorpha</taxon>
        <taxon>Ephydroidea</taxon>
        <taxon>Drosophilidae</taxon>
        <taxon>Drosophila</taxon>
        <taxon>Sophophora</taxon>
    </lineage>
</organism>
<name>C12C1_DROME</name>
<protein>
    <recommendedName>
        <fullName>Probable cytochrome P450 12c1, mitochondrial</fullName>
        <ecNumber>1.14.-.-</ecNumber>
    </recommendedName>
    <alternativeName>
        <fullName>CYPXIIC1</fullName>
    </alternativeName>
</protein>
<reference key="1">
    <citation type="journal article" date="2000" name="Science">
        <title>The genome sequence of Drosophila melanogaster.</title>
        <authorList>
            <person name="Adams M.D."/>
            <person name="Celniker S.E."/>
            <person name="Holt R.A."/>
            <person name="Evans C.A."/>
            <person name="Gocayne J.D."/>
            <person name="Amanatides P.G."/>
            <person name="Scherer S.E."/>
            <person name="Li P.W."/>
            <person name="Hoskins R.A."/>
            <person name="Galle R.F."/>
            <person name="George R.A."/>
            <person name="Lewis S.E."/>
            <person name="Richards S."/>
            <person name="Ashburner M."/>
            <person name="Henderson S.N."/>
            <person name="Sutton G.G."/>
            <person name="Wortman J.R."/>
            <person name="Yandell M.D."/>
            <person name="Zhang Q."/>
            <person name="Chen L.X."/>
            <person name="Brandon R.C."/>
            <person name="Rogers Y.-H.C."/>
            <person name="Blazej R.G."/>
            <person name="Champe M."/>
            <person name="Pfeiffer B.D."/>
            <person name="Wan K.H."/>
            <person name="Doyle C."/>
            <person name="Baxter E.G."/>
            <person name="Helt G."/>
            <person name="Nelson C.R."/>
            <person name="Miklos G.L.G."/>
            <person name="Abril J.F."/>
            <person name="Agbayani A."/>
            <person name="An H.-J."/>
            <person name="Andrews-Pfannkoch C."/>
            <person name="Baldwin D."/>
            <person name="Ballew R.M."/>
            <person name="Basu A."/>
            <person name="Baxendale J."/>
            <person name="Bayraktaroglu L."/>
            <person name="Beasley E.M."/>
            <person name="Beeson K.Y."/>
            <person name="Benos P.V."/>
            <person name="Berman B.P."/>
            <person name="Bhandari D."/>
            <person name="Bolshakov S."/>
            <person name="Borkova D."/>
            <person name="Botchan M.R."/>
            <person name="Bouck J."/>
            <person name="Brokstein P."/>
            <person name="Brottier P."/>
            <person name="Burtis K.C."/>
            <person name="Busam D.A."/>
            <person name="Butler H."/>
            <person name="Cadieu E."/>
            <person name="Center A."/>
            <person name="Chandra I."/>
            <person name="Cherry J.M."/>
            <person name="Cawley S."/>
            <person name="Dahlke C."/>
            <person name="Davenport L.B."/>
            <person name="Davies P."/>
            <person name="de Pablos B."/>
            <person name="Delcher A."/>
            <person name="Deng Z."/>
            <person name="Mays A.D."/>
            <person name="Dew I."/>
            <person name="Dietz S.M."/>
            <person name="Dodson K."/>
            <person name="Doup L.E."/>
            <person name="Downes M."/>
            <person name="Dugan-Rocha S."/>
            <person name="Dunkov B.C."/>
            <person name="Dunn P."/>
            <person name="Durbin K.J."/>
            <person name="Evangelista C.C."/>
            <person name="Ferraz C."/>
            <person name="Ferriera S."/>
            <person name="Fleischmann W."/>
            <person name="Fosler C."/>
            <person name="Gabrielian A.E."/>
            <person name="Garg N.S."/>
            <person name="Gelbart W.M."/>
            <person name="Glasser K."/>
            <person name="Glodek A."/>
            <person name="Gong F."/>
            <person name="Gorrell J.H."/>
            <person name="Gu Z."/>
            <person name="Guan P."/>
            <person name="Harris M."/>
            <person name="Harris N.L."/>
            <person name="Harvey D.A."/>
            <person name="Heiman T.J."/>
            <person name="Hernandez J.R."/>
            <person name="Houck J."/>
            <person name="Hostin D."/>
            <person name="Houston K.A."/>
            <person name="Howland T.J."/>
            <person name="Wei M.-H."/>
            <person name="Ibegwam C."/>
            <person name="Jalali M."/>
            <person name="Kalush F."/>
            <person name="Karpen G.H."/>
            <person name="Ke Z."/>
            <person name="Kennison J.A."/>
            <person name="Ketchum K.A."/>
            <person name="Kimmel B.E."/>
            <person name="Kodira C.D."/>
            <person name="Kraft C.L."/>
            <person name="Kravitz S."/>
            <person name="Kulp D."/>
            <person name="Lai Z."/>
            <person name="Lasko P."/>
            <person name="Lei Y."/>
            <person name="Levitsky A.A."/>
            <person name="Li J.H."/>
            <person name="Li Z."/>
            <person name="Liang Y."/>
            <person name="Lin X."/>
            <person name="Liu X."/>
            <person name="Mattei B."/>
            <person name="McIntosh T.C."/>
            <person name="McLeod M.P."/>
            <person name="McPherson D."/>
            <person name="Merkulov G."/>
            <person name="Milshina N.V."/>
            <person name="Mobarry C."/>
            <person name="Morris J."/>
            <person name="Moshrefi A."/>
            <person name="Mount S.M."/>
            <person name="Moy M."/>
            <person name="Murphy B."/>
            <person name="Murphy L."/>
            <person name="Muzny D.M."/>
            <person name="Nelson D.L."/>
            <person name="Nelson D.R."/>
            <person name="Nelson K.A."/>
            <person name="Nixon K."/>
            <person name="Nusskern D.R."/>
            <person name="Pacleb J.M."/>
            <person name="Palazzolo M."/>
            <person name="Pittman G.S."/>
            <person name="Pan S."/>
            <person name="Pollard J."/>
            <person name="Puri V."/>
            <person name="Reese M.G."/>
            <person name="Reinert K."/>
            <person name="Remington K."/>
            <person name="Saunders R.D.C."/>
            <person name="Scheeler F."/>
            <person name="Shen H."/>
            <person name="Shue B.C."/>
            <person name="Siden-Kiamos I."/>
            <person name="Simpson M."/>
            <person name="Skupski M.P."/>
            <person name="Smith T.J."/>
            <person name="Spier E."/>
            <person name="Spradling A.C."/>
            <person name="Stapleton M."/>
            <person name="Strong R."/>
            <person name="Sun E."/>
            <person name="Svirskas R."/>
            <person name="Tector C."/>
            <person name="Turner R."/>
            <person name="Venter E."/>
            <person name="Wang A.H."/>
            <person name="Wang X."/>
            <person name="Wang Z.-Y."/>
            <person name="Wassarman D.A."/>
            <person name="Weinstock G.M."/>
            <person name="Weissenbach J."/>
            <person name="Williams S.M."/>
            <person name="Woodage T."/>
            <person name="Worley K.C."/>
            <person name="Wu D."/>
            <person name="Yang S."/>
            <person name="Yao Q.A."/>
            <person name="Ye J."/>
            <person name="Yeh R.-F."/>
            <person name="Zaveri J.S."/>
            <person name="Zhan M."/>
            <person name="Zhang G."/>
            <person name="Zhao Q."/>
            <person name="Zheng L."/>
            <person name="Zheng X.H."/>
            <person name="Zhong F.N."/>
            <person name="Zhong W."/>
            <person name="Zhou X."/>
            <person name="Zhu S.C."/>
            <person name="Zhu X."/>
            <person name="Smith H.O."/>
            <person name="Gibbs R.A."/>
            <person name="Myers E.W."/>
            <person name="Rubin G.M."/>
            <person name="Venter J.C."/>
        </authorList>
    </citation>
    <scope>NUCLEOTIDE SEQUENCE [LARGE SCALE GENOMIC DNA]</scope>
    <source>
        <strain>Berkeley</strain>
    </source>
</reference>
<reference key="2">
    <citation type="journal article" date="2002" name="Genome Biol.">
        <title>Annotation of the Drosophila melanogaster euchromatic genome: a systematic review.</title>
        <authorList>
            <person name="Misra S."/>
            <person name="Crosby M.A."/>
            <person name="Mungall C.J."/>
            <person name="Matthews B.B."/>
            <person name="Campbell K.S."/>
            <person name="Hradecky P."/>
            <person name="Huang Y."/>
            <person name="Kaminker J.S."/>
            <person name="Millburn G.H."/>
            <person name="Prochnik S.E."/>
            <person name="Smith C.D."/>
            <person name="Tupy J.L."/>
            <person name="Whitfield E.J."/>
            <person name="Bayraktaroglu L."/>
            <person name="Berman B.P."/>
            <person name="Bettencourt B.R."/>
            <person name="Celniker S.E."/>
            <person name="de Grey A.D.N.J."/>
            <person name="Drysdale R.A."/>
            <person name="Harris N.L."/>
            <person name="Richter J."/>
            <person name="Russo S."/>
            <person name="Schroeder A.J."/>
            <person name="Shu S.Q."/>
            <person name="Stapleton M."/>
            <person name="Yamada C."/>
            <person name="Ashburner M."/>
            <person name="Gelbart W.M."/>
            <person name="Rubin G.M."/>
            <person name="Lewis S.E."/>
        </authorList>
    </citation>
    <scope>GENOME REANNOTATION</scope>
    <source>
        <strain>Berkeley</strain>
    </source>
</reference>
<reference key="3">
    <citation type="journal article" date="2002" name="Genome Biol.">
        <title>A Drosophila full-length cDNA resource.</title>
        <authorList>
            <person name="Stapleton M."/>
            <person name="Carlson J.W."/>
            <person name="Brokstein P."/>
            <person name="Yu C."/>
            <person name="Champe M."/>
            <person name="George R.A."/>
            <person name="Guarin H."/>
            <person name="Kronmiller B."/>
            <person name="Pacleb J.M."/>
            <person name="Park S."/>
            <person name="Wan K.H."/>
            <person name="Rubin G.M."/>
            <person name="Celniker S.E."/>
        </authorList>
    </citation>
    <scope>NUCLEOTIDE SEQUENCE [LARGE SCALE MRNA]</scope>
    <source>
        <strain>Berkeley</strain>
        <tissue>Head</tissue>
    </source>
</reference>
<evidence type="ECO:0000250" key="1"/>
<evidence type="ECO:0000255" key="2"/>
<evidence type="ECO:0000305" key="3"/>
<accession>Q9VVR9</accession>
<proteinExistence type="evidence at transcript level"/>
<comment type="cofactor">
    <cofactor evidence="1">
        <name>heme</name>
        <dbReference type="ChEBI" id="CHEBI:30413"/>
    </cofactor>
</comment>
<comment type="subcellular location">
    <subcellularLocation>
        <location evidence="3">Mitochondrion membrane</location>
    </subcellularLocation>
</comment>
<comment type="similarity">
    <text evidence="3">Belongs to the cytochrome P450 family.</text>
</comment>
<keyword id="KW-0349">Heme</keyword>
<keyword id="KW-0408">Iron</keyword>
<keyword id="KW-0472">Membrane</keyword>
<keyword id="KW-0479">Metal-binding</keyword>
<keyword id="KW-0496">Mitochondrion</keyword>
<keyword id="KW-0503">Monooxygenase</keyword>
<keyword id="KW-0560">Oxidoreductase</keyword>
<keyword id="KW-1185">Reference proteome</keyword>
<keyword id="KW-0809">Transit peptide</keyword>
<gene>
    <name type="primary">Cyp12c1</name>
    <name type="ORF">CG4120</name>
</gene>